<evidence type="ECO:0000255" key="1">
    <source>
        <dbReference type="HAMAP-Rule" id="MF_01628"/>
    </source>
</evidence>
<feature type="chain" id="PRO_0000059076" description="Thymidine phosphorylase">
    <location>
        <begin position="1"/>
        <end position="440"/>
    </location>
</feature>
<keyword id="KW-0328">Glycosyltransferase</keyword>
<keyword id="KW-0808">Transferase</keyword>
<name>TYPH_YERPS</name>
<comment type="function">
    <text evidence="1">The enzymes which catalyze the reversible phosphorolysis of pyrimidine nucleosides are involved in the degradation of these compounds and in their utilization as carbon and energy sources, or in the rescue of pyrimidine bases for nucleotide synthesis.</text>
</comment>
<comment type="catalytic activity">
    <reaction evidence="1">
        <text>thymidine + phosphate = 2-deoxy-alpha-D-ribose 1-phosphate + thymine</text>
        <dbReference type="Rhea" id="RHEA:16037"/>
        <dbReference type="ChEBI" id="CHEBI:17748"/>
        <dbReference type="ChEBI" id="CHEBI:17821"/>
        <dbReference type="ChEBI" id="CHEBI:43474"/>
        <dbReference type="ChEBI" id="CHEBI:57259"/>
        <dbReference type="EC" id="2.4.2.4"/>
    </reaction>
</comment>
<comment type="pathway">
    <text evidence="1">Pyrimidine metabolism; dTMP biosynthesis via salvage pathway; dTMP from thymine: step 1/2.</text>
</comment>
<comment type="subunit">
    <text evidence="1">Homodimer.</text>
</comment>
<comment type="similarity">
    <text evidence="1">Belongs to the thymidine/pyrimidine-nucleoside phosphorylase family.</text>
</comment>
<gene>
    <name evidence="1" type="primary">deoA</name>
    <name type="ordered locus">YPTB0582</name>
</gene>
<organism>
    <name type="scientific">Yersinia pseudotuberculosis serotype I (strain IP32953)</name>
    <dbReference type="NCBI Taxonomy" id="273123"/>
    <lineage>
        <taxon>Bacteria</taxon>
        <taxon>Pseudomonadati</taxon>
        <taxon>Pseudomonadota</taxon>
        <taxon>Gammaproteobacteria</taxon>
        <taxon>Enterobacterales</taxon>
        <taxon>Yersiniaceae</taxon>
        <taxon>Yersinia</taxon>
    </lineage>
</organism>
<dbReference type="EC" id="2.4.2.4" evidence="1"/>
<dbReference type="EMBL" id="BX936398">
    <property type="protein sequence ID" value="CAH19822.1"/>
    <property type="molecule type" value="Genomic_DNA"/>
</dbReference>
<dbReference type="RefSeq" id="WP_011191687.1">
    <property type="nucleotide sequence ID" value="NC_006155.1"/>
</dbReference>
<dbReference type="SMR" id="Q66EV9"/>
<dbReference type="GeneID" id="49787418"/>
<dbReference type="KEGG" id="ypo:BZ17_1977"/>
<dbReference type="KEGG" id="yps:YPTB0582"/>
<dbReference type="PATRIC" id="fig|273123.14.peg.2103"/>
<dbReference type="UniPathway" id="UPA00578">
    <property type="reaction ID" value="UER00638"/>
</dbReference>
<dbReference type="Proteomes" id="UP000001011">
    <property type="component" value="Chromosome"/>
</dbReference>
<dbReference type="GO" id="GO:0005829">
    <property type="term" value="C:cytosol"/>
    <property type="evidence" value="ECO:0007669"/>
    <property type="project" value="TreeGrafter"/>
</dbReference>
<dbReference type="GO" id="GO:0004645">
    <property type="term" value="F:1,4-alpha-oligoglucan phosphorylase activity"/>
    <property type="evidence" value="ECO:0007669"/>
    <property type="project" value="InterPro"/>
</dbReference>
<dbReference type="GO" id="GO:0009032">
    <property type="term" value="F:thymidine phosphorylase activity"/>
    <property type="evidence" value="ECO:0007669"/>
    <property type="project" value="UniProtKB-UniRule"/>
</dbReference>
<dbReference type="GO" id="GO:0006206">
    <property type="term" value="P:pyrimidine nucleobase metabolic process"/>
    <property type="evidence" value="ECO:0007669"/>
    <property type="project" value="InterPro"/>
</dbReference>
<dbReference type="GO" id="GO:0046104">
    <property type="term" value="P:thymidine metabolic process"/>
    <property type="evidence" value="ECO:0007669"/>
    <property type="project" value="UniProtKB-UniRule"/>
</dbReference>
<dbReference type="FunFam" id="3.40.1030.10:FF:000001">
    <property type="entry name" value="Thymidine phosphorylase"/>
    <property type="match status" value="1"/>
</dbReference>
<dbReference type="FunFam" id="3.90.1170.30:FF:000001">
    <property type="entry name" value="Thymidine phosphorylase"/>
    <property type="match status" value="1"/>
</dbReference>
<dbReference type="Gene3D" id="3.40.1030.10">
    <property type="entry name" value="Nucleoside phosphorylase/phosphoribosyltransferase catalytic domain"/>
    <property type="match status" value="1"/>
</dbReference>
<dbReference type="Gene3D" id="3.90.1170.30">
    <property type="entry name" value="Pyrimidine nucleoside phosphorylase-like, C-terminal domain"/>
    <property type="match status" value="1"/>
</dbReference>
<dbReference type="Gene3D" id="1.20.970.10">
    <property type="entry name" value="Transferase, Pyrimidine Nucleoside Phosphorylase, Chain C"/>
    <property type="match status" value="1"/>
</dbReference>
<dbReference type="HAMAP" id="MF_01628">
    <property type="entry name" value="Thymid_phosp"/>
    <property type="match status" value="1"/>
</dbReference>
<dbReference type="InterPro" id="IPR000312">
    <property type="entry name" value="Glycosyl_Trfase_fam3"/>
</dbReference>
<dbReference type="InterPro" id="IPR017459">
    <property type="entry name" value="Glycosyl_Trfase_fam3_N_dom"/>
</dbReference>
<dbReference type="InterPro" id="IPR036320">
    <property type="entry name" value="Glycosyl_Trfase_fam3_N_dom_sf"/>
</dbReference>
<dbReference type="InterPro" id="IPR035902">
    <property type="entry name" value="Nuc_phospho_transferase"/>
</dbReference>
<dbReference type="InterPro" id="IPR036566">
    <property type="entry name" value="PYNP-like_C_sf"/>
</dbReference>
<dbReference type="InterPro" id="IPR013102">
    <property type="entry name" value="PYNP_C"/>
</dbReference>
<dbReference type="InterPro" id="IPR018090">
    <property type="entry name" value="Pyrmidine_PPas_bac/euk"/>
</dbReference>
<dbReference type="InterPro" id="IPR017872">
    <property type="entry name" value="Pyrmidine_PPase_CS"/>
</dbReference>
<dbReference type="InterPro" id="IPR000053">
    <property type="entry name" value="Thymidine/pyrmidine_PPase"/>
</dbReference>
<dbReference type="InterPro" id="IPR013465">
    <property type="entry name" value="Thymidine_Pase"/>
</dbReference>
<dbReference type="NCBIfam" id="NF004490">
    <property type="entry name" value="PRK05820.1"/>
    <property type="match status" value="1"/>
</dbReference>
<dbReference type="NCBIfam" id="TIGR02643">
    <property type="entry name" value="T_phosphoryl"/>
    <property type="match status" value="1"/>
</dbReference>
<dbReference type="NCBIfam" id="TIGR02644">
    <property type="entry name" value="Y_phosphoryl"/>
    <property type="match status" value="1"/>
</dbReference>
<dbReference type="PANTHER" id="PTHR10515">
    <property type="entry name" value="THYMIDINE PHOSPHORYLASE"/>
    <property type="match status" value="1"/>
</dbReference>
<dbReference type="PANTHER" id="PTHR10515:SF0">
    <property type="entry name" value="THYMIDINE PHOSPHORYLASE"/>
    <property type="match status" value="1"/>
</dbReference>
<dbReference type="Pfam" id="PF02885">
    <property type="entry name" value="Glycos_trans_3N"/>
    <property type="match status" value="1"/>
</dbReference>
<dbReference type="Pfam" id="PF00591">
    <property type="entry name" value="Glycos_transf_3"/>
    <property type="match status" value="1"/>
</dbReference>
<dbReference type="Pfam" id="PF07831">
    <property type="entry name" value="PYNP_C"/>
    <property type="match status" value="1"/>
</dbReference>
<dbReference type="PIRSF" id="PIRSF000478">
    <property type="entry name" value="TP_PyNP"/>
    <property type="match status" value="1"/>
</dbReference>
<dbReference type="SMART" id="SM00941">
    <property type="entry name" value="PYNP_C"/>
    <property type="match status" value="1"/>
</dbReference>
<dbReference type="SUPFAM" id="SSF52418">
    <property type="entry name" value="Nucleoside phosphorylase/phosphoribosyltransferase catalytic domain"/>
    <property type="match status" value="1"/>
</dbReference>
<dbReference type="SUPFAM" id="SSF47648">
    <property type="entry name" value="Nucleoside phosphorylase/phosphoribosyltransferase N-terminal domain"/>
    <property type="match status" value="1"/>
</dbReference>
<dbReference type="SUPFAM" id="SSF54680">
    <property type="entry name" value="Pyrimidine nucleoside phosphorylase C-terminal domain"/>
    <property type="match status" value="1"/>
</dbReference>
<dbReference type="PROSITE" id="PS00647">
    <property type="entry name" value="THYMID_PHOSPHORYLASE"/>
    <property type="match status" value="1"/>
</dbReference>
<sequence>MFLAQEIIRKKRDGQPLSEEEIRFFINGIRDNVVSEGQIAALAMTIYFHDMSMPERVALTMAMRDSGTVLNWKSLNLNGPLVDKHSTGGVGDVTSLMLGPMVAACGGYVPMISGRGLGHTGGTLDKLEAIPGFDIFPDDNAFRKIIQNVGVAIIGQTSSLAPADKRFYATRDITATVDSIPLITASILAKKLAEGLDALVMDVKVGSGAFMPTYSLSADLAQAIVGVANGAGCKTTALLTDMNQVLASSAGNGVEVREAVRFLTGEYRNPRLLEVTMALCVEMLLSGGLAHDEADARAKLQAVLDNGKAAEVFGRMVAAQKGPVDFVERYDSYLPVATLSKPVFAEQTGIITAMDTRALGMAVVALGGGRRRATDPIDYSVGLTEMARLGTRVDGQQPLAVIHANNEDDWQQAAEAVRAAITLGNNAPEETPVIYRRITE</sequence>
<proteinExistence type="inferred from homology"/>
<reference key="1">
    <citation type="journal article" date="2004" name="Proc. Natl. Acad. Sci. U.S.A.">
        <title>Insights into the evolution of Yersinia pestis through whole-genome comparison with Yersinia pseudotuberculosis.</title>
        <authorList>
            <person name="Chain P.S.G."/>
            <person name="Carniel E."/>
            <person name="Larimer F.W."/>
            <person name="Lamerdin J."/>
            <person name="Stoutland P.O."/>
            <person name="Regala W.M."/>
            <person name="Georgescu A.M."/>
            <person name="Vergez L.M."/>
            <person name="Land M.L."/>
            <person name="Motin V.L."/>
            <person name="Brubaker R.R."/>
            <person name="Fowler J."/>
            <person name="Hinnebusch J."/>
            <person name="Marceau M."/>
            <person name="Medigue C."/>
            <person name="Simonet M."/>
            <person name="Chenal-Francisque V."/>
            <person name="Souza B."/>
            <person name="Dacheux D."/>
            <person name="Elliott J.M."/>
            <person name="Derbise A."/>
            <person name="Hauser L.J."/>
            <person name="Garcia E."/>
        </authorList>
    </citation>
    <scope>NUCLEOTIDE SEQUENCE [LARGE SCALE GENOMIC DNA]</scope>
    <source>
        <strain>IP32953</strain>
    </source>
</reference>
<protein>
    <recommendedName>
        <fullName evidence="1">Thymidine phosphorylase</fullName>
        <ecNumber evidence="1">2.4.2.4</ecNumber>
    </recommendedName>
    <alternativeName>
        <fullName evidence="1">TdRPase</fullName>
    </alternativeName>
</protein>
<accession>Q66EV9</accession>